<evidence type="ECO:0000255" key="1">
    <source>
        <dbReference type="HAMAP-Rule" id="MF_01692"/>
    </source>
</evidence>
<reference key="1">
    <citation type="journal article" date="2006" name="J. Bacteriol.">
        <title>Whole-genome sequence of Listeria welshimeri reveals common steps in genome reduction with Listeria innocua as compared to Listeria monocytogenes.</title>
        <authorList>
            <person name="Hain T."/>
            <person name="Steinweg C."/>
            <person name="Kuenne C.T."/>
            <person name="Billion A."/>
            <person name="Ghai R."/>
            <person name="Chatterjee S.S."/>
            <person name="Domann E."/>
            <person name="Kaerst U."/>
            <person name="Goesmann A."/>
            <person name="Bekel T."/>
            <person name="Bartels D."/>
            <person name="Kaiser O."/>
            <person name="Meyer F."/>
            <person name="Puehler A."/>
            <person name="Weisshaar B."/>
            <person name="Wehland J."/>
            <person name="Liang C."/>
            <person name="Dandekar T."/>
            <person name="Lampidis R."/>
            <person name="Kreft J."/>
            <person name="Goebel W."/>
            <person name="Chakraborty T."/>
        </authorList>
    </citation>
    <scope>NUCLEOTIDE SEQUENCE [LARGE SCALE GENOMIC DNA]</scope>
    <source>
        <strain>ATCC 35897 / DSM 20650 / CCUG 15529 / CIP 8149 / NCTC 11857 / SLCC 5334 / V8</strain>
    </source>
</reference>
<organism>
    <name type="scientific">Listeria welshimeri serovar 6b (strain ATCC 35897 / DSM 20650 / CCUG 15529 / CIP 8149 / NCTC 11857 / SLCC 5334 / V8)</name>
    <dbReference type="NCBI Taxonomy" id="386043"/>
    <lineage>
        <taxon>Bacteria</taxon>
        <taxon>Bacillati</taxon>
        <taxon>Bacillota</taxon>
        <taxon>Bacilli</taxon>
        <taxon>Bacillales</taxon>
        <taxon>Listeriaceae</taxon>
        <taxon>Listeria</taxon>
    </lineage>
</organism>
<proteinExistence type="inferred from homology"/>
<protein>
    <recommendedName>
        <fullName evidence="1">N-acetyldiaminopimelate deacetylase</fullName>
        <ecNumber evidence="1">3.5.1.47</ecNumber>
    </recommendedName>
</protein>
<accession>A0AHD2</accession>
<feature type="chain" id="PRO_0000376776" description="N-acetyldiaminopimelate deacetylase">
    <location>
        <begin position="1"/>
        <end position="371"/>
    </location>
</feature>
<feature type="active site" evidence="1">
    <location>
        <position position="68"/>
    </location>
</feature>
<feature type="active site" description="Proton acceptor" evidence="1">
    <location>
        <position position="127"/>
    </location>
</feature>
<dbReference type="EC" id="3.5.1.47" evidence="1"/>
<dbReference type="EMBL" id="AM263198">
    <property type="protein sequence ID" value="CAK20414.1"/>
    <property type="molecule type" value="Genomic_DNA"/>
</dbReference>
<dbReference type="RefSeq" id="WP_011701822.1">
    <property type="nucleotide sequence ID" value="NC_008555.1"/>
</dbReference>
<dbReference type="SMR" id="A0AHD2"/>
<dbReference type="STRING" id="386043.lwe0996"/>
<dbReference type="MEROPS" id="M20.A27"/>
<dbReference type="GeneID" id="61188886"/>
<dbReference type="KEGG" id="lwe:lwe0996"/>
<dbReference type="eggNOG" id="COG1473">
    <property type="taxonomic scope" value="Bacteria"/>
</dbReference>
<dbReference type="HOGENOM" id="CLU_023257_0_1_9"/>
<dbReference type="OrthoDB" id="9776731at2"/>
<dbReference type="UniPathway" id="UPA00034">
    <property type="reaction ID" value="UER00024"/>
</dbReference>
<dbReference type="Proteomes" id="UP000000779">
    <property type="component" value="Chromosome"/>
</dbReference>
<dbReference type="GO" id="GO:0050118">
    <property type="term" value="F:N-acetyldiaminopimelate deacetylase activity"/>
    <property type="evidence" value="ECO:0007669"/>
    <property type="project" value="UniProtKB-UniRule"/>
</dbReference>
<dbReference type="GO" id="GO:0019877">
    <property type="term" value="P:diaminopimelate biosynthetic process"/>
    <property type="evidence" value="ECO:0007669"/>
    <property type="project" value="UniProtKB-UniRule"/>
</dbReference>
<dbReference type="GO" id="GO:0009089">
    <property type="term" value="P:lysine biosynthetic process via diaminopimelate"/>
    <property type="evidence" value="ECO:0007669"/>
    <property type="project" value="UniProtKB-UniRule"/>
</dbReference>
<dbReference type="CDD" id="cd05670">
    <property type="entry name" value="M20_Acy1_YkuR-like"/>
    <property type="match status" value="1"/>
</dbReference>
<dbReference type="FunFam" id="3.30.70.360:FF:000001">
    <property type="entry name" value="N-acetyldiaminopimelate deacetylase"/>
    <property type="match status" value="1"/>
</dbReference>
<dbReference type="Gene3D" id="3.30.70.360">
    <property type="match status" value="1"/>
</dbReference>
<dbReference type="Gene3D" id="3.40.630.10">
    <property type="entry name" value="Zn peptidases"/>
    <property type="match status" value="1"/>
</dbReference>
<dbReference type="HAMAP" id="MF_01692">
    <property type="entry name" value="DapEL"/>
    <property type="match status" value="1"/>
</dbReference>
<dbReference type="InterPro" id="IPR023905">
    <property type="entry name" value="AcetylDAP_deacetylase"/>
</dbReference>
<dbReference type="InterPro" id="IPR017439">
    <property type="entry name" value="Amidohydrolase"/>
</dbReference>
<dbReference type="InterPro" id="IPR036264">
    <property type="entry name" value="Bact_exopeptidase_dim_dom"/>
</dbReference>
<dbReference type="InterPro" id="IPR002933">
    <property type="entry name" value="Peptidase_M20"/>
</dbReference>
<dbReference type="InterPro" id="IPR011650">
    <property type="entry name" value="Peptidase_M20_dimer"/>
</dbReference>
<dbReference type="NCBIfam" id="TIGR01891">
    <property type="entry name" value="amidohydrolases"/>
    <property type="match status" value="1"/>
</dbReference>
<dbReference type="PANTHER" id="PTHR11014:SF98">
    <property type="entry name" value="N-ACETYLDIAMINOPIMELATE DEACETYLASE"/>
    <property type="match status" value="1"/>
</dbReference>
<dbReference type="PANTHER" id="PTHR11014">
    <property type="entry name" value="PEPTIDASE M20 FAMILY MEMBER"/>
    <property type="match status" value="1"/>
</dbReference>
<dbReference type="Pfam" id="PF07687">
    <property type="entry name" value="M20_dimer"/>
    <property type="match status" value="1"/>
</dbReference>
<dbReference type="Pfam" id="PF01546">
    <property type="entry name" value="Peptidase_M20"/>
    <property type="match status" value="1"/>
</dbReference>
<dbReference type="PIRSF" id="PIRSF005962">
    <property type="entry name" value="Pept_M20D_amidohydro"/>
    <property type="match status" value="1"/>
</dbReference>
<dbReference type="SUPFAM" id="SSF55031">
    <property type="entry name" value="Bacterial exopeptidase dimerisation domain"/>
    <property type="match status" value="1"/>
</dbReference>
<dbReference type="SUPFAM" id="SSF53187">
    <property type="entry name" value="Zn-dependent exopeptidases"/>
    <property type="match status" value="1"/>
</dbReference>
<comment type="function">
    <text evidence="1">Catalyzes the conversion of N-acetyl-diaminopimelate to diaminopimelate and acetate.</text>
</comment>
<comment type="catalytic activity">
    <reaction evidence="1">
        <text>N-acetyl-(2S,6S)-2,6-diaminopimelate + H2O = (2S,6S)-2,6-diaminopimelate + acetate</text>
        <dbReference type="Rhea" id="RHEA:20405"/>
        <dbReference type="ChEBI" id="CHEBI:15377"/>
        <dbReference type="ChEBI" id="CHEBI:30089"/>
        <dbReference type="ChEBI" id="CHEBI:57609"/>
        <dbReference type="ChEBI" id="CHEBI:58767"/>
        <dbReference type="EC" id="3.5.1.47"/>
    </reaction>
</comment>
<comment type="pathway">
    <text evidence="1">Amino-acid biosynthesis; L-lysine biosynthesis via DAP pathway; LL-2,6-diaminopimelate from (S)-tetrahydrodipicolinate (acetylase route): step 3/3.</text>
</comment>
<comment type="similarity">
    <text evidence="1">Belongs to the peptidase M20A family. N-acetyldiaminopimelate deacetylase subfamily.</text>
</comment>
<sequence>MLNEFIAIRRDLHQIPETGYKELKTQAYLLAYISKLPNKHLEVKKWRTGILVLVKGTKPEKTIGYRTDIDALPITEETGLPFESNHVGNMHACGHDLHMSIALGVLTHFASKPAKDNLLFVFQPAEEGPGGAKPIMESEEFAAWRPDTIYGLHIAPEYKVGEIAIKPGLLFANTSELFISFKGKGGHAAYPHLANDMVVAASAFVGQMQTIISRNIDPMDSAVITIGRIHGGEIQNVIAETAFLDGTIRTLSPETMEIVWTRLKQLAKGWEEAYQCEVEFHPGSDYYQVDNEPLETEEFIRFLKEHYPESYVPARSAMTGEDFGYFLSEIKGFMFWLGVDSEYSLHHAKLNPKEEAIPFAIDVLINFLESK</sequence>
<name>DAPEL_LISW6</name>
<gene>
    <name type="ordered locus">lwe0996</name>
</gene>
<keyword id="KW-0028">Amino-acid biosynthesis</keyword>
<keyword id="KW-0220">Diaminopimelate biosynthesis</keyword>
<keyword id="KW-0378">Hydrolase</keyword>
<keyword id="KW-0457">Lysine biosynthesis</keyword>